<feature type="chain" id="PRO_0000134633" description="Orotidine 5'-phosphate decarboxylase">
    <location>
        <begin position="1"/>
        <end position="271"/>
    </location>
</feature>
<feature type="active site" description="Proton donor" evidence="1">
    <location>
        <position position="95"/>
    </location>
</feature>
<dbReference type="EC" id="4.1.1.23"/>
<dbReference type="EMBL" id="AL646052">
    <property type="protein sequence ID" value="CAD16480.1"/>
    <property type="status" value="ALT_INIT"/>
    <property type="molecule type" value="Genomic_DNA"/>
</dbReference>
<dbReference type="RefSeq" id="WP_028860983.1">
    <property type="nucleotide sequence ID" value="NC_003295.1"/>
</dbReference>
<dbReference type="SMR" id="P58642"/>
<dbReference type="STRING" id="267608.RSc2773"/>
<dbReference type="EnsemblBacteria" id="CAD16480">
    <property type="protein sequence ID" value="CAD16480"/>
    <property type="gene ID" value="RSc2773"/>
</dbReference>
<dbReference type="KEGG" id="rso:RSc2773"/>
<dbReference type="eggNOG" id="COG0284">
    <property type="taxonomic scope" value="Bacteria"/>
</dbReference>
<dbReference type="HOGENOM" id="CLU_060704_1_0_4"/>
<dbReference type="UniPathway" id="UPA00070">
    <property type="reaction ID" value="UER00120"/>
</dbReference>
<dbReference type="Proteomes" id="UP000001436">
    <property type="component" value="Chromosome"/>
</dbReference>
<dbReference type="GO" id="GO:0004590">
    <property type="term" value="F:orotidine-5'-phosphate decarboxylase activity"/>
    <property type="evidence" value="ECO:0007669"/>
    <property type="project" value="UniProtKB-UniRule"/>
</dbReference>
<dbReference type="GO" id="GO:0006207">
    <property type="term" value="P:'de novo' pyrimidine nucleobase biosynthetic process"/>
    <property type="evidence" value="ECO:0007669"/>
    <property type="project" value="InterPro"/>
</dbReference>
<dbReference type="GO" id="GO:0044205">
    <property type="term" value="P:'de novo' UMP biosynthetic process"/>
    <property type="evidence" value="ECO:0007669"/>
    <property type="project" value="UniProtKB-UniRule"/>
</dbReference>
<dbReference type="CDD" id="cd04725">
    <property type="entry name" value="OMP_decarboxylase_like"/>
    <property type="match status" value="1"/>
</dbReference>
<dbReference type="Gene3D" id="3.20.20.70">
    <property type="entry name" value="Aldolase class I"/>
    <property type="match status" value="1"/>
</dbReference>
<dbReference type="HAMAP" id="MF_01215">
    <property type="entry name" value="OMPdecase_type2"/>
    <property type="match status" value="1"/>
</dbReference>
<dbReference type="InterPro" id="IPR013785">
    <property type="entry name" value="Aldolase_TIM"/>
</dbReference>
<dbReference type="InterPro" id="IPR018089">
    <property type="entry name" value="OMPdecase_AS"/>
</dbReference>
<dbReference type="InterPro" id="IPR011995">
    <property type="entry name" value="OMPdecase_type-2"/>
</dbReference>
<dbReference type="InterPro" id="IPR001754">
    <property type="entry name" value="OMPdeCOase_dom"/>
</dbReference>
<dbReference type="InterPro" id="IPR011060">
    <property type="entry name" value="RibuloseP-bd_barrel"/>
</dbReference>
<dbReference type="NCBIfam" id="TIGR02127">
    <property type="entry name" value="pyrF_sub2"/>
    <property type="match status" value="1"/>
</dbReference>
<dbReference type="PANTHER" id="PTHR43375">
    <property type="entry name" value="OROTIDINE 5'-PHOSPHATE DECARBOXYLASE"/>
    <property type="match status" value="1"/>
</dbReference>
<dbReference type="PANTHER" id="PTHR43375:SF1">
    <property type="entry name" value="OROTIDINE 5'-PHOSPHATE DECARBOXYLASE"/>
    <property type="match status" value="1"/>
</dbReference>
<dbReference type="Pfam" id="PF00215">
    <property type="entry name" value="OMPdecase"/>
    <property type="match status" value="1"/>
</dbReference>
<dbReference type="SMART" id="SM00934">
    <property type="entry name" value="OMPdecase"/>
    <property type="match status" value="1"/>
</dbReference>
<dbReference type="SUPFAM" id="SSF51366">
    <property type="entry name" value="Ribulose-phoshate binding barrel"/>
    <property type="match status" value="1"/>
</dbReference>
<dbReference type="PROSITE" id="PS00156">
    <property type="entry name" value="OMPDECASE"/>
    <property type="match status" value="1"/>
</dbReference>
<organism>
    <name type="scientific">Ralstonia nicotianae (strain ATCC BAA-1114 / GMI1000)</name>
    <name type="common">Ralstonia solanacearum</name>
    <dbReference type="NCBI Taxonomy" id="267608"/>
    <lineage>
        <taxon>Bacteria</taxon>
        <taxon>Pseudomonadati</taxon>
        <taxon>Pseudomonadota</taxon>
        <taxon>Betaproteobacteria</taxon>
        <taxon>Burkholderiales</taxon>
        <taxon>Burkholderiaceae</taxon>
        <taxon>Ralstonia</taxon>
        <taxon>Ralstonia solanacearum species complex</taxon>
    </lineage>
</organism>
<evidence type="ECO:0000250" key="1"/>
<evidence type="ECO:0000305" key="2"/>
<name>PYRF_RALN1</name>
<comment type="catalytic activity">
    <reaction>
        <text>orotidine 5'-phosphate + H(+) = UMP + CO2</text>
        <dbReference type="Rhea" id="RHEA:11596"/>
        <dbReference type="ChEBI" id="CHEBI:15378"/>
        <dbReference type="ChEBI" id="CHEBI:16526"/>
        <dbReference type="ChEBI" id="CHEBI:57538"/>
        <dbReference type="ChEBI" id="CHEBI:57865"/>
        <dbReference type="EC" id="4.1.1.23"/>
    </reaction>
</comment>
<comment type="pathway">
    <text>Pyrimidine metabolism; UMP biosynthesis via de novo pathway; UMP from orotate: step 2/2.</text>
</comment>
<comment type="similarity">
    <text evidence="2">Belongs to the OMP decarboxylase family. Type 2 subfamily.</text>
</comment>
<comment type="sequence caution" evidence="2">
    <conflict type="erroneous initiation">
        <sequence resource="EMBL-CDS" id="CAD16480"/>
    </conflict>
</comment>
<sequence>MRFTEQLAAAWQRNNSLLCVGLDPDPARLPASLTTSGGAIFSFCRAIVDATADLVCAFKPQIAYFASQRAEDQLEQLIAYIHEAYPGIPVILDAKRGDIGSTAEHYAKEAFERYQADAVTVSPYMGFDSMQPYLVHPDKGVIVLCRTSNAGGSDVQFLETNGRPVYQVVAERARDAWNTSGQMGLVVGATFPQEIRRVREIVGDMPLLIPGIGVQGGDIEATVRAGRTADGTGMMINSSRAILYASSDSDFADAARGVAQATRDQINQYRN</sequence>
<proteinExistence type="inferred from homology"/>
<protein>
    <recommendedName>
        <fullName>Orotidine 5'-phosphate decarboxylase</fullName>
        <ecNumber>4.1.1.23</ecNumber>
    </recommendedName>
    <alternativeName>
        <fullName>OMP decarboxylase</fullName>
        <shortName>OMPDCase</shortName>
        <shortName>OMPdecase</shortName>
    </alternativeName>
</protein>
<reference key="1">
    <citation type="journal article" date="2002" name="Nature">
        <title>Genome sequence of the plant pathogen Ralstonia solanacearum.</title>
        <authorList>
            <person name="Salanoubat M."/>
            <person name="Genin S."/>
            <person name="Artiguenave F."/>
            <person name="Gouzy J."/>
            <person name="Mangenot S."/>
            <person name="Arlat M."/>
            <person name="Billault A."/>
            <person name="Brottier P."/>
            <person name="Camus J.-C."/>
            <person name="Cattolico L."/>
            <person name="Chandler M."/>
            <person name="Choisne N."/>
            <person name="Claudel-Renard C."/>
            <person name="Cunnac S."/>
            <person name="Demange N."/>
            <person name="Gaspin C."/>
            <person name="Lavie M."/>
            <person name="Moisan A."/>
            <person name="Robert C."/>
            <person name="Saurin W."/>
            <person name="Schiex T."/>
            <person name="Siguier P."/>
            <person name="Thebault P."/>
            <person name="Whalen M."/>
            <person name="Wincker P."/>
            <person name="Levy M."/>
            <person name="Weissenbach J."/>
            <person name="Boucher C.A."/>
        </authorList>
    </citation>
    <scope>NUCLEOTIDE SEQUENCE [LARGE SCALE GENOMIC DNA]</scope>
    <source>
        <strain>ATCC BAA-1114 / GMI1000</strain>
    </source>
</reference>
<accession>P58642</accession>
<keyword id="KW-0210">Decarboxylase</keyword>
<keyword id="KW-0456">Lyase</keyword>
<keyword id="KW-0665">Pyrimidine biosynthesis</keyword>
<keyword id="KW-1185">Reference proteome</keyword>
<gene>
    <name type="primary">pyrF</name>
    <name type="ordered locus">RSc2773</name>
    <name type="ORF">RS00074</name>
</gene>